<reference key="1">
    <citation type="journal article" date="2011" name="Stand. Genomic Sci.">
        <title>Complete genome sequence of 'Thioalkalivibrio sulfidophilus' HL-EbGr7.</title>
        <authorList>
            <person name="Muyzer G."/>
            <person name="Sorokin D.Y."/>
            <person name="Mavromatis K."/>
            <person name="Lapidus A."/>
            <person name="Clum A."/>
            <person name="Ivanova N."/>
            <person name="Pati A."/>
            <person name="d'Haeseleer P."/>
            <person name="Woyke T."/>
            <person name="Kyrpides N.C."/>
        </authorList>
    </citation>
    <scope>NUCLEOTIDE SEQUENCE [LARGE SCALE GENOMIC DNA]</scope>
    <source>
        <strain>HL-EbGR7</strain>
    </source>
</reference>
<sequence length="86" mass="9424">MANIASARKRARQAEKNRQHNMALRSRFRTSVKKVLKAVVAGDKEAAQAALKAAVPVIDGTVNKGLIHKNKAARHKSRLNARVKAM</sequence>
<protein>
    <recommendedName>
        <fullName evidence="1">Small ribosomal subunit protein bS20</fullName>
    </recommendedName>
    <alternativeName>
        <fullName evidence="3">30S ribosomal protein S20</fullName>
    </alternativeName>
</protein>
<proteinExistence type="inferred from homology"/>
<dbReference type="EMBL" id="CP001339">
    <property type="protein sequence ID" value="ACL74279.1"/>
    <property type="molecule type" value="Genomic_DNA"/>
</dbReference>
<dbReference type="RefSeq" id="WP_012639741.1">
    <property type="nucleotide sequence ID" value="NC_011901.1"/>
</dbReference>
<dbReference type="SMR" id="B8GQQ5"/>
<dbReference type="STRING" id="396588.Tgr7_3210"/>
<dbReference type="KEGG" id="tgr:Tgr7_3210"/>
<dbReference type="eggNOG" id="COG0268">
    <property type="taxonomic scope" value="Bacteria"/>
</dbReference>
<dbReference type="HOGENOM" id="CLU_160655_4_0_6"/>
<dbReference type="OrthoDB" id="9807974at2"/>
<dbReference type="Proteomes" id="UP000002383">
    <property type="component" value="Chromosome"/>
</dbReference>
<dbReference type="GO" id="GO:0005829">
    <property type="term" value="C:cytosol"/>
    <property type="evidence" value="ECO:0007669"/>
    <property type="project" value="TreeGrafter"/>
</dbReference>
<dbReference type="GO" id="GO:0015935">
    <property type="term" value="C:small ribosomal subunit"/>
    <property type="evidence" value="ECO:0007669"/>
    <property type="project" value="TreeGrafter"/>
</dbReference>
<dbReference type="GO" id="GO:0070181">
    <property type="term" value="F:small ribosomal subunit rRNA binding"/>
    <property type="evidence" value="ECO:0007669"/>
    <property type="project" value="TreeGrafter"/>
</dbReference>
<dbReference type="GO" id="GO:0003735">
    <property type="term" value="F:structural constituent of ribosome"/>
    <property type="evidence" value="ECO:0007669"/>
    <property type="project" value="InterPro"/>
</dbReference>
<dbReference type="GO" id="GO:0006412">
    <property type="term" value="P:translation"/>
    <property type="evidence" value="ECO:0007669"/>
    <property type="project" value="UniProtKB-UniRule"/>
</dbReference>
<dbReference type="FunFam" id="1.20.58.110:FF:000001">
    <property type="entry name" value="30S ribosomal protein S20"/>
    <property type="match status" value="1"/>
</dbReference>
<dbReference type="Gene3D" id="1.20.58.110">
    <property type="entry name" value="Ribosomal protein S20"/>
    <property type="match status" value="1"/>
</dbReference>
<dbReference type="HAMAP" id="MF_00500">
    <property type="entry name" value="Ribosomal_bS20"/>
    <property type="match status" value="1"/>
</dbReference>
<dbReference type="InterPro" id="IPR002583">
    <property type="entry name" value="Ribosomal_bS20"/>
</dbReference>
<dbReference type="InterPro" id="IPR036510">
    <property type="entry name" value="Ribosomal_bS20_sf"/>
</dbReference>
<dbReference type="NCBIfam" id="TIGR00029">
    <property type="entry name" value="S20"/>
    <property type="match status" value="1"/>
</dbReference>
<dbReference type="PANTHER" id="PTHR33398">
    <property type="entry name" value="30S RIBOSOMAL PROTEIN S20"/>
    <property type="match status" value="1"/>
</dbReference>
<dbReference type="PANTHER" id="PTHR33398:SF1">
    <property type="entry name" value="SMALL RIBOSOMAL SUBUNIT PROTEIN BS20C"/>
    <property type="match status" value="1"/>
</dbReference>
<dbReference type="Pfam" id="PF01649">
    <property type="entry name" value="Ribosomal_S20p"/>
    <property type="match status" value="1"/>
</dbReference>
<dbReference type="SUPFAM" id="SSF46992">
    <property type="entry name" value="Ribosomal protein S20"/>
    <property type="match status" value="1"/>
</dbReference>
<comment type="function">
    <text evidence="1">Binds directly to 16S ribosomal RNA.</text>
</comment>
<comment type="similarity">
    <text evidence="1">Belongs to the bacterial ribosomal protein bS20 family.</text>
</comment>
<name>RS20_THISH</name>
<accession>B8GQQ5</accession>
<evidence type="ECO:0000255" key="1">
    <source>
        <dbReference type="HAMAP-Rule" id="MF_00500"/>
    </source>
</evidence>
<evidence type="ECO:0000256" key="2">
    <source>
        <dbReference type="SAM" id="MobiDB-lite"/>
    </source>
</evidence>
<evidence type="ECO:0000305" key="3"/>
<organism>
    <name type="scientific">Thioalkalivibrio sulfidiphilus (strain HL-EbGR7)</name>
    <dbReference type="NCBI Taxonomy" id="396588"/>
    <lineage>
        <taxon>Bacteria</taxon>
        <taxon>Pseudomonadati</taxon>
        <taxon>Pseudomonadota</taxon>
        <taxon>Gammaproteobacteria</taxon>
        <taxon>Chromatiales</taxon>
        <taxon>Ectothiorhodospiraceae</taxon>
        <taxon>Thioalkalivibrio</taxon>
    </lineage>
</organism>
<keyword id="KW-1185">Reference proteome</keyword>
<keyword id="KW-0687">Ribonucleoprotein</keyword>
<keyword id="KW-0689">Ribosomal protein</keyword>
<keyword id="KW-0694">RNA-binding</keyword>
<keyword id="KW-0699">rRNA-binding</keyword>
<gene>
    <name evidence="1" type="primary">rpsT</name>
    <name type="ordered locus">Tgr7_3210</name>
</gene>
<feature type="chain" id="PRO_1000194273" description="Small ribosomal subunit protein bS20">
    <location>
        <begin position="1"/>
        <end position="86"/>
    </location>
</feature>
<feature type="region of interest" description="Disordered" evidence="2">
    <location>
        <begin position="1"/>
        <end position="22"/>
    </location>
</feature>